<gene>
    <name evidence="1" type="primary">panD</name>
    <name type="ordered locus">MW2516</name>
</gene>
<comment type="function">
    <text evidence="1">Catalyzes the pyruvoyl-dependent decarboxylation of aspartate to produce beta-alanine.</text>
</comment>
<comment type="catalytic activity">
    <reaction evidence="1">
        <text>L-aspartate + H(+) = beta-alanine + CO2</text>
        <dbReference type="Rhea" id="RHEA:19497"/>
        <dbReference type="ChEBI" id="CHEBI:15378"/>
        <dbReference type="ChEBI" id="CHEBI:16526"/>
        <dbReference type="ChEBI" id="CHEBI:29991"/>
        <dbReference type="ChEBI" id="CHEBI:57966"/>
        <dbReference type="EC" id="4.1.1.11"/>
    </reaction>
</comment>
<comment type="cofactor">
    <cofactor evidence="1">
        <name>pyruvate</name>
        <dbReference type="ChEBI" id="CHEBI:15361"/>
    </cofactor>
    <text evidence="1">Binds 1 pyruvoyl group covalently per subunit.</text>
</comment>
<comment type="pathway">
    <text evidence="1">Cofactor biosynthesis; (R)-pantothenate biosynthesis; beta-alanine from L-aspartate: step 1/1.</text>
</comment>
<comment type="subunit">
    <text evidence="1">Heterooctamer of four alpha and four beta subunits.</text>
</comment>
<comment type="subcellular location">
    <subcellularLocation>
        <location evidence="1">Cytoplasm</location>
    </subcellularLocation>
</comment>
<comment type="PTM">
    <text evidence="1">Is synthesized initially as an inactive proenzyme, which is activated by self-cleavage at a specific serine bond to produce a beta-subunit with a hydroxyl group at its C-terminus and an alpha-subunit with a pyruvoyl group at its N-terminus.</text>
</comment>
<comment type="similarity">
    <text evidence="1">Belongs to the PanD family.</text>
</comment>
<keyword id="KW-0068">Autocatalytic cleavage</keyword>
<keyword id="KW-0963">Cytoplasm</keyword>
<keyword id="KW-0210">Decarboxylase</keyword>
<keyword id="KW-0456">Lyase</keyword>
<keyword id="KW-0566">Pantothenate biosynthesis</keyword>
<keyword id="KW-0670">Pyruvate</keyword>
<keyword id="KW-0704">Schiff base</keyword>
<keyword id="KW-0865">Zymogen</keyword>
<protein>
    <recommendedName>
        <fullName evidence="1">Aspartate 1-decarboxylase</fullName>
        <ecNumber evidence="1">4.1.1.11</ecNumber>
    </recommendedName>
    <alternativeName>
        <fullName evidence="1">Aspartate alpha-decarboxylase</fullName>
    </alternativeName>
    <component>
        <recommendedName>
            <fullName evidence="1">Aspartate 1-decarboxylase beta chain</fullName>
        </recommendedName>
    </component>
    <component>
        <recommendedName>
            <fullName evidence="1">Aspartate 1-decarboxylase alpha chain</fullName>
        </recommendedName>
    </component>
</protein>
<sequence length="127" mass="14050">MIRTMMNAKIHRARVTESNLNYVGSITIDSDILEAVDILPNEKVAIVNNNNGARFETYVIAGERGSGKICLNGAASRLVEVGDVVIIMTYAQLNEEEIQNHAPKVAVMNEDNVIIEMIHEKENTIVL</sequence>
<accession>Q8NUN3</accession>
<organism>
    <name type="scientific">Staphylococcus aureus (strain MW2)</name>
    <dbReference type="NCBI Taxonomy" id="196620"/>
    <lineage>
        <taxon>Bacteria</taxon>
        <taxon>Bacillati</taxon>
        <taxon>Bacillota</taxon>
        <taxon>Bacilli</taxon>
        <taxon>Bacillales</taxon>
        <taxon>Staphylococcaceae</taxon>
        <taxon>Staphylococcus</taxon>
    </lineage>
</organism>
<evidence type="ECO:0000255" key="1">
    <source>
        <dbReference type="HAMAP-Rule" id="MF_00446"/>
    </source>
</evidence>
<name>PAND_STAAW</name>
<reference key="1">
    <citation type="journal article" date="2002" name="Lancet">
        <title>Genome and virulence determinants of high virulence community-acquired MRSA.</title>
        <authorList>
            <person name="Baba T."/>
            <person name="Takeuchi F."/>
            <person name="Kuroda M."/>
            <person name="Yuzawa H."/>
            <person name="Aoki K."/>
            <person name="Oguchi A."/>
            <person name="Nagai Y."/>
            <person name="Iwama N."/>
            <person name="Asano K."/>
            <person name="Naimi T."/>
            <person name="Kuroda H."/>
            <person name="Cui L."/>
            <person name="Yamamoto K."/>
            <person name="Hiramatsu K."/>
        </authorList>
    </citation>
    <scope>NUCLEOTIDE SEQUENCE [LARGE SCALE GENOMIC DNA]</scope>
    <source>
        <strain>MW2</strain>
    </source>
</reference>
<feature type="chain" id="PRO_0000023167" description="Aspartate 1-decarboxylase beta chain" evidence="1">
    <location>
        <begin position="1"/>
        <end position="24"/>
    </location>
</feature>
<feature type="chain" id="PRO_0000023168" description="Aspartate 1-decarboxylase alpha chain" evidence="1">
    <location>
        <begin position="25"/>
        <end position="127"/>
    </location>
</feature>
<feature type="active site" description="Schiff-base intermediate with substrate; via pyruvic acid" evidence="1">
    <location>
        <position position="25"/>
    </location>
</feature>
<feature type="active site" description="Proton donor" evidence="1">
    <location>
        <position position="58"/>
    </location>
</feature>
<feature type="binding site" evidence="1">
    <location>
        <position position="57"/>
    </location>
    <ligand>
        <name>substrate</name>
    </ligand>
</feature>
<feature type="binding site" evidence="1">
    <location>
        <begin position="73"/>
        <end position="75"/>
    </location>
    <ligand>
        <name>substrate</name>
    </ligand>
</feature>
<feature type="modified residue" description="Pyruvic acid (Ser)" evidence="1">
    <location>
        <position position="25"/>
    </location>
</feature>
<proteinExistence type="inferred from homology"/>
<dbReference type="EC" id="4.1.1.11" evidence="1"/>
<dbReference type="EMBL" id="BA000033">
    <property type="protein sequence ID" value="BAB96381.1"/>
    <property type="molecule type" value="Genomic_DNA"/>
</dbReference>
<dbReference type="RefSeq" id="WP_000621533.1">
    <property type="nucleotide sequence ID" value="NC_003923.1"/>
</dbReference>
<dbReference type="SMR" id="Q8NUN3"/>
<dbReference type="KEGG" id="sam:MW2516"/>
<dbReference type="HOGENOM" id="CLU_115305_2_0_9"/>
<dbReference type="UniPathway" id="UPA00028">
    <property type="reaction ID" value="UER00002"/>
</dbReference>
<dbReference type="GO" id="GO:0005829">
    <property type="term" value="C:cytosol"/>
    <property type="evidence" value="ECO:0007669"/>
    <property type="project" value="TreeGrafter"/>
</dbReference>
<dbReference type="GO" id="GO:0004068">
    <property type="term" value="F:aspartate 1-decarboxylase activity"/>
    <property type="evidence" value="ECO:0007669"/>
    <property type="project" value="UniProtKB-UniRule"/>
</dbReference>
<dbReference type="GO" id="GO:0006523">
    <property type="term" value="P:alanine biosynthetic process"/>
    <property type="evidence" value="ECO:0007669"/>
    <property type="project" value="InterPro"/>
</dbReference>
<dbReference type="GO" id="GO:0015940">
    <property type="term" value="P:pantothenate biosynthetic process"/>
    <property type="evidence" value="ECO:0007669"/>
    <property type="project" value="UniProtKB-UniRule"/>
</dbReference>
<dbReference type="CDD" id="cd06919">
    <property type="entry name" value="Asp_decarbox"/>
    <property type="match status" value="1"/>
</dbReference>
<dbReference type="Gene3D" id="2.40.40.20">
    <property type="match status" value="1"/>
</dbReference>
<dbReference type="HAMAP" id="MF_00446">
    <property type="entry name" value="PanD"/>
    <property type="match status" value="1"/>
</dbReference>
<dbReference type="InterPro" id="IPR009010">
    <property type="entry name" value="Asp_de-COase-like_dom_sf"/>
</dbReference>
<dbReference type="InterPro" id="IPR003190">
    <property type="entry name" value="Asp_decarbox"/>
</dbReference>
<dbReference type="NCBIfam" id="TIGR00223">
    <property type="entry name" value="panD"/>
    <property type="match status" value="1"/>
</dbReference>
<dbReference type="PANTHER" id="PTHR21012">
    <property type="entry name" value="ASPARTATE 1-DECARBOXYLASE"/>
    <property type="match status" value="1"/>
</dbReference>
<dbReference type="PANTHER" id="PTHR21012:SF0">
    <property type="entry name" value="ASPARTATE 1-DECARBOXYLASE"/>
    <property type="match status" value="1"/>
</dbReference>
<dbReference type="Pfam" id="PF02261">
    <property type="entry name" value="Asp_decarbox"/>
    <property type="match status" value="1"/>
</dbReference>
<dbReference type="PIRSF" id="PIRSF006246">
    <property type="entry name" value="Asp_decarbox"/>
    <property type="match status" value="1"/>
</dbReference>
<dbReference type="SUPFAM" id="SSF50692">
    <property type="entry name" value="ADC-like"/>
    <property type="match status" value="1"/>
</dbReference>